<organism>
    <name type="scientific">Pseudomonas putida (strain ATCC 700007 / DSM 6899 / JCM 31910 / BCRC 17059 / LMG 24140 / F1)</name>
    <dbReference type="NCBI Taxonomy" id="351746"/>
    <lineage>
        <taxon>Bacteria</taxon>
        <taxon>Pseudomonadati</taxon>
        <taxon>Pseudomonadota</taxon>
        <taxon>Gammaproteobacteria</taxon>
        <taxon>Pseudomonadales</taxon>
        <taxon>Pseudomonadaceae</taxon>
        <taxon>Pseudomonas</taxon>
    </lineage>
</organism>
<comment type="function">
    <text evidence="1">Bifunctional enzyme which can phosphorylate or dephosphorylate isocitrate dehydrogenase (IDH) on a specific serine residue. This is a regulatory mechanism which enables bacteria to bypass the Krebs cycle via the glyoxylate shunt in response to the source of carbon. When bacteria are grown on glucose, IDH is fully active and unphosphorylated, but when grown on acetate or ethanol, the activity of IDH declines drastically concomitant with its phosphorylation.</text>
</comment>
<comment type="catalytic activity">
    <reaction evidence="1">
        <text>L-seryl-[isocitrate dehydrogenase] + ATP = O-phospho-L-seryl-[isocitrate dehydrogenase] + ADP + H(+)</text>
        <dbReference type="Rhea" id="RHEA:43540"/>
        <dbReference type="Rhea" id="RHEA-COMP:10605"/>
        <dbReference type="Rhea" id="RHEA-COMP:10606"/>
        <dbReference type="ChEBI" id="CHEBI:15378"/>
        <dbReference type="ChEBI" id="CHEBI:29999"/>
        <dbReference type="ChEBI" id="CHEBI:30616"/>
        <dbReference type="ChEBI" id="CHEBI:83421"/>
        <dbReference type="ChEBI" id="CHEBI:456216"/>
        <dbReference type="EC" id="2.7.11.5"/>
    </reaction>
</comment>
<comment type="subcellular location">
    <subcellularLocation>
        <location evidence="1">Cytoplasm</location>
    </subcellularLocation>
</comment>
<comment type="similarity">
    <text evidence="1">Belongs to the AceK family.</text>
</comment>
<protein>
    <recommendedName>
        <fullName evidence="1">Isocitrate dehydrogenase kinase/phosphatase</fullName>
        <shortName evidence="1">IDH kinase/phosphatase</shortName>
        <shortName evidence="1">IDHK/P</shortName>
        <ecNumber evidence="1">2.7.11.5</ecNumber>
        <ecNumber evidence="1">3.1.3.-</ecNumber>
    </recommendedName>
</protein>
<gene>
    <name evidence="1" type="primary">aceK</name>
    <name type="ordered locus">Pput_1324</name>
</gene>
<dbReference type="EC" id="2.7.11.5" evidence="1"/>
<dbReference type="EC" id="3.1.3.-" evidence="1"/>
<dbReference type="EMBL" id="CP000712">
    <property type="protein sequence ID" value="ABQ77484.1"/>
    <property type="molecule type" value="Genomic_DNA"/>
</dbReference>
<dbReference type="SMR" id="A5W024"/>
<dbReference type="KEGG" id="ppf:Pput_1324"/>
<dbReference type="eggNOG" id="COG4579">
    <property type="taxonomic scope" value="Bacteria"/>
</dbReference>
<dbReference type="HOGENOM" id="CLU_033804_1_1_6"/>
<dbReference type="GO" id="GO:0005737">
    <property type="term" value="C:cytoplasm"/>
    <property type="evidence" value="ECO:0007669"/>
    <property type="project" value="UniProtKB-SubCell"/>
</dbReference>
<dbReference type="GO" id="GO:0008772">
    <property type="term" value="F:[isocitrate dehydrogenase (NADP+)] kinase activity"/>
    <property type="evidence" value="ECO:0007669"/>
    <property type="project" value="UniProtKB-UniRule"/>
</dbReference>
<dbReference type="GO" id="GO:0016208">
    <property type="term" value="F:AMP binding"/>
    <property type="evidence" value="ECO:0007669"/>
    <property type="project" value="TreeGrafter"/>
</dbReference>
<dbReference type="GO" id="GO:0005524">
    <property type="term" value="F:ATP binding"/>
    <property type="evidence" value="ECO:0007669"/>
    <property type="project" value="UniProtKB-UniRule"/>
</dbReference>
<dbReference type="GO" id="GO:0004721">
    <property type="term" value="F:phosphoprotein phosphatase activity"/>
    <property type="evidence" value="ECO:0007669"/>
    <property type="project" value="UniProtKB-KW"/>
</dbReference>
<dbReference type="GO" id="GO:0004674">
    <property type="term" value="F:protein serine/threonine kinase activity"/>
    <property type="evidence" value="ECO:0007669"/>
    <property type="project" value="UniProtKB-KW"/>
</dbReference>
<dbReference type="GO" id="GO:0006006">
    <property type="term" value="P:glucose metabolic process"/>
    <property type="evidence" value="ECO:0007669"/>
    <property type="project" value="InterPro"/>
</dbReference>
<dbReference type="GO" id="GO:0006097">
    <property type="term" value="P:glyoxylate cycle"/>
    <property type="evidence" value="ECO:0007669"/>
    <property type="project" value="UniProtKB-UniRule"/>
</dbReference>
<dbReference type="GO" id="GO:0006099">
    <property type="term" value="P:tricarboxylic acid cycle"/>
    <property type="evidence" value="ECO:0007669"/>
    <property type="project" value="UniProtKB-UniRule"/>
</dbReference>
<dbReference type="HAMAP" id="MF_00747">
    <property type="entry name" value="AceK"/>
    <property type="match status" value="1"/>
</dbReference>
<dbReference type="InterPro" id="IPR046855">
    <property type="entry name" value="AceK_kinase"/>
</dbReference>
<dbReference type="InterPro" id="IPR046854">
    <property type="entry name" value="AceK_regulatory"/>
</dbReference>
<dbReference type="InterPro" id="IPR010452">
    <property type="entry name" value="Isocitrate_DH_AceK"/>
</dbReference>
<dbReference type="NCBIfam" id="NF002804">
    <property type="entry name" value="PRK02946.1"/>
    <property type="match status" value="1"/>
</dbReference>
<dbReference type="PANTHER" id="PTHR39559">
    <property type="match status" value="1"/>
</dbReference>
<dbReference type="PANTHER" id="PTHR39559:SF1">
    <property type="entry name" value="ISOCITRATE DEHYDROGENASE KINASE_PHOSPHATASE"/>
    <property type="match status" value="1"/>
</dbReference>
<dbReference type="Pfam" id="PF06315">
    <property type="entry name" value="AceK_kinase"/>
    <property type="match status" value="1"/>
</dbReference>
<dbReference type="Pfam" id="PF20423">
    <property type="entry name" value="AceK_regulatory"/>
    <property type="match status" value="1"/>
</dbReference>
<dbReference type="PIRSF" id="PIRSF000719">
    <property type="entry name" value="AceK"/>
    <property type="match status" value="1"/>
</dbReference>
<sequence length="571" mass="65954">MSQPWPAVEIARMILAGFDDYRDHFQRITLGARQRFEQARWQDIQQAAAARINLYEEKVAEVNGWLRQAFAAEVLLDVEQWPLVKNAYIHLIDPRLDDELAETWYNSLFCSLFSHDLISDGCMFIHTTRPSMRGRERAAQTRTYRLDGSLRNLLRAVFADYPFDMPYGDLEGDLARLEEQLRECLPDWVCKDPALAVELFVPVLYRNKGAYLVGRLYNSDEQWPLVIPLLHREGHGIEADALITDEAEVSIIFSFTRSYFMADVPVPAEFVNFLKRILPGKHIAELYTSIGFYKQGKSEFYRALINHLASSDDRFVMAPGVRGMVMSVFTLPGFNTVFKIIKDRFSPSKTVDRATVIDKYRLVKSVDRVGRMADTQEFADFRFPRSKFEPDCLAELLEVAPSTVALEGDTVLIRHCWTERRMTPLNLYLEQATEGQVLEALEDYGLAIKQLAAANIFPGDMLLKNFGVTRHGRVVFYDYDEISFLTEVNFRHIPPPRYPEDEMSGEPWYSIGPHDVFPEEFPPFLFADMGQRRLFSRLHGELYDADYWKGLQAAIREGKVIDVFPYRRKAR</sequence>
<proteinExistence type="inferred from homology"/>
<evidence type="ECO:0000255" key="1">
    <source>
        <dbReference type="HAMAP-Rule" id="MF_00747"/>
    </source>
</evidence>
<name>ACEK_PSEP1</name>
<feature type="chain" id="PRO_0000315270" description="Isocitrate dehydrogenase kinase/phosphatase">
    <location>
        <begin position="1"/>
        <end position="571"/>
    </location>
</feature>
<feature type="active site" evidence="1">
    <location>
        <position position="374"/>
    </location>
</feature>
<feature type="binding site" evidence="1">
    <location>
        <begin position="318"/>
        <end position="324"/>
    </location>
    <ligand>
        <name>ATP</name>
        <dbReference type="ChEBI" id="CHEBI:30616"/>
    </ligand>
</feature>
<feature type="binding site" evidence="1">
    <location>
        <position position="339"/>
    </location>
    <ligand>
        <name>ATP</name>
        <dbReference type="ChEBI" id="CHEBI:30616"/>
    </ligand>
</feature>
<keyword id="KW-0067">ATP-binding</keyword>
<keyword id="KW-0963">Cytoplasm</keyword>
<keyword id="KW-0329">Glyoxylate bypass</keyword>
<keyword id="KW-0378">Hydrolase</keyword>
<keyword id="KW-0418">Kinase</keyword>
<keyword id="KW-0547">Nucleotide-binding</keyword>
<keyword id="KW-0904">Protein phosphatase</keyword>
<keyword id="KW-0723">Serine/threonine-protein kinase</keyword>
<keyword id="KW-0808">Transferase</keyword>
<keyword id="KW-0816">Tricarboxylic acid cycle</keyword>
<accession>A5W024</accession>
<reference key="1">
    <citation type="submission" date="2007-05" db="EMBL/GenBank/DDBJ databases">
        <title>Complete sequence of Pseudomonas putida F1.</title>
        <authorList>
            <consortium name="US DOE Joint Genome Institute"/>
            <person name="Copeland A."/>
            <person name="Lucas S."/>
            <person name="Lapidus A."/>
            <person name="Barry K."/>
            <person name="Detter J.C."/>
            <person name="Glavina del Rio T."/>
            <person name="Hammon N."/>
            <person name="Israni S."/>
            <person name="Dalin E."/>
            <person name="Tice H."/>
            <person name="Pitluck S."/>
            <person name="Chain P."/>
            <person name="Malfatti S."/>
            <person name="Shin M."/>
            <person name="Vergez L."/>
            <person name="Schmutz J."/>
            <person name="Larimer F."/>
            <person name="Land M."/>
            <person name="Hauser L."/>
            <person name="Kyrpides N."/>
            <person name="Lykidis A."/>
            <person name="Parales R."/>
            <person name="Richardson P."/>
        </authorList>
    </citation>
    <scope>NUCLEOTIDE SEQUENCE [LARGE SCALE GENOMIC DNA]</scope>
    <source>
        <strain>ATCC 700007 / DSM 6899 / JCM 31910 / BCRC 17059 / LMG 24140 / F1</strain>
    </source>
</reference>